<dbReference type="EMBL" id="CP000110">
    <property type="protein sequence ID" value="ABB35769.1"/>
    <property type="molecule type" value="Genomic_DNA"/>
</dbReference>
<dbReference type="RefSeq" id="WP_011364977.1">
    <property type="nucleotide sequence ID" value="NC_007516.1"/>
</dbReference>
<dbReference type="SMR" id="Q3AI13"/>
<dbReference type="STRING" id="110662.Syncc9605_2028"/>
<dbReference type="KEGG" id="syd:Syncc9605_2028"/>
<dbReference type="eggNOG" id="COG1160">
    <property type="taxonomic scope" value="Bacteria"/>
</dbReference>
<dbReference type="HOGENOM" id="CLU_016077_6_2_3"/>
<dbReference type="OrthoDB" id="9805918at2"/>
<dbReference type="GO" id="GO:0016887">
    <property type="term" value="F:ATP hydrolysis activity"/>
    <property type="evidence" value="ECO:0007669"/>
    <property type="project" value="InterPro"/>
</dbReference>
<dbReference type="GO" id="GO:0005525">
    <property type="term" value="F:GTP binding"/>
    <property type="evidence" value="ECO:0007669"/>
    <property type="project" value="UniProtKB-UniRule"/>
</dbReference>
<dbReference type="GO" id="GO:0043022">
    <property type="term" value="F:ribosome binding"/>
    <property type="evidence" value="ECO:0007669"/>
    <property type="project" value="TreeGrafter"/>
</dbReference>
<dbReference type="GO" id="GO:0042254">
    <property type="term" value="P:ribosome biogenesis"/>
    <property type="evidence" value="ECO:0007669"/>
    <property type="project" value="UniProtKB-KW"/>
</dbReference>
<dbReference type="CDD" id="cd01894">
    <property type="entry name" value="EngA1"/>
    <property type="match status" value="1"/>
</dbReference>
<dbReference type="CDD" id="cd01895">
    <property type="entry name" value="EngA2"/>
    <property type="match status" value="1"/>
</dbReference>
<dbReference type="FunFam" id="3.30.300.20:FF:000004">
    <property type="entry name" value="GTPase Der"/>
    <property type="match status" value="1"/>
</dbReference>
<dbReference type="FunFam" id="3.40.50.300:FF:000040">
    <property type="entry name" value="GTPase Der"/>
    <property type="match status" value="1"/>
</dbReference>
<dbReference type="FunFam" id="3.40.50.300:FF:001185">
    <property type="entry name" value="GTPase Der"/>
    <property type="match status" value="1"/>
</dbReference>
<dbReference type="Gene3D" id="3.30.300.20">
    <property type="match status" value="1"/>
</dbReference>
<dbReference type="Gene3D" id="3.40.50.300">
    <property type="entry name" value="P-loop containing nucleotide triphosphate hydrolases"/>
    <property type="match status" value="2"/>
</dbReference>
<dbReference type="HAMAP" id="MF_00195">
    <property type="entry name" value="GTPase_Der"/>
    <property type="match status" value="1"/>
</dbReference>
<dbReference type="InterPro" id="IPR003593">
    <property type="entry name" value="AAA+_ATPase"/>
</dbReference>
<dbReference type="InterPro" id="IPR031166">
    <property type="entry name" value="G_ENGA"/>
</dbReference>
<dbReference type="InterPro" id="IPR006073">
    <property type="entry name" value="GTP-bd"/>
</dbReference>
<dbReference type="InterPro" id="IPR016484">
    <property type="entry name" value="GTPase_Der"/>
</dbReference>
<dbReference type="InterPro" id="IPR032859">
    <property type="entry name" value="KH_dom-like"/>
</dbReference>
<dbReference type="InterPro" id="IPR015946">
    <property type="entry name" value="KH_dom-like_a/b"/>
</dbReference>
<dbReference type="InterPro" id="IPR027417">
    <property type="entry name" value="P-loop_NTPase"/>
</dbReference>
<dbReference type="InterPro" id="IPR005225">
    <property type="entry name" value="Small_GTP-bd"/>
</dbReference>
<dbReference type="NCBIfam" id="TIGR03594">
    <property type="entry name" value="GTPase_EngA"/>
    <property type="match status" value="1"/>
</dbReference>
<dbReference type="NCBIfam" id="TIGR00231">
    <property type="entry name" value="small_GTP"/>
    <property type="match status" value="2"/>
</dbReference>
<dbReference type="PANTHER" id="PTHR43834">
    <property type="entry name" value="GTPASE DER"/>
    <property type="match status" value="1"/>
</dbReference>
<dbReference type="PANTHER" id="PTHR43834:SF6">
    <property type="entry name" value="GTPASE DER"/>
    <property type="match status" value="1"/>
</dbReference>
<dbReference type="Pfam" id="PF14714">
    <property type="entry name" value="KH_dom-like"/>
    <property type="match status" value="1"/>
</dbReference>
<dbReference type="Pfam" id="PF01926">
    <property type="entry name" value="MMR_HSR1"/>
    <property type="match status" value="2"/>
</dbReference>
<dbReference type="PIRSF" id="PIRSF006485">
    <property type="entry name" value="GTP-binding_EngA"/>
    <property type="match status" value="1"/>
</dbReference>
<dbReference type="PRINTS" id="PR00326">
    <property type="entry name" value="GTP1OBG"/>
</dbReference>
<dbReference type="SMART" id="SM00382">
    <property type="entry name" value="AAA"/>
    <property type="match status" value="2"/>
</dbReference>
<dbReference type="SUPFAM" id="SSF52540">
    <property type="entry name" value="P-loop containing nucleoside triphosphate hydrolases"/>
    <property type="match status" value="2"/>
</dbReference>
<dbReference type="PROSITE" id="PS51712">
    <property type="entry name" value="G_ENGA"/>
    <property type="match status" value="2"/>
</dbReference>
<organism>
    <name type="scientific">Synechococcus sp. (strain CC9605)</name>
    <dbReference type="NCBI Taxonomy" id="110662"/>
    <lineage>
        <taxon>Bacteria</taxon>
        <taxon>Bacillati</taxon>
        <taxon>Cyanobacteriota</taxon>
        <taxon>Cyanophyceae</taxon>
        <taxon>Synechococcales</taxon>
        <taxon>Synechococcaceae</taxon>
        <taxon>Synechococcus</taxon>
    </lineage>
</organism>
<name>DER_SYNSC</name>
<feature type="chain" id="PRO_1000011773" description="GTPase Der">
    <location>
        <begin position="1"/>
        <end position="455"/>
    </location>
</feature>
<feature type="domain" description="EngA-type G 1">
    <location>
        <begin position="4"/>
        <end position="169"/>
    </location>
</feature>
<feature type="domain" description="EngA-type G 2">
    <location>
        <begin position="178"/>
        <end position="353"/>
    </location>
</feature>
<feature type="domain" description="KH-like" evidence="1">
    <location>
        <begin position="354"/>
        <end position="439"/>
    </location>
</feature>
<feature type="binding site" evidence="1">
    <location>
        <begin position="10"/>
        <end position="17"/>
    </location>
    <ligand>
        <name>GTP</name>
        <dbReference type="ChEBI" id="CHEBI:37565"/>
        <label>1</label>
    </ligand>
</feature>
<feature type="binding site" evidence="1">
    <location>
        <begin position="57"/>
        <end position="61"/>
    </location>
    <ligand>
        <name>GTP</name>
        <dbReference type="ChEBI" id="CHEBI:37565"/>
        <label>1</label>
    </ligand>
</feature>
<feature type="binding site" evidence="1">
    <location>
        <begin position="120"/>
        <end position="123"/>
    </location>
    <ligand>
        <name>GTP</name>
        <dbReference type="ChEBI" id="CHEBI:37565"/>
        <label>1</label>
    </ligand>
</feature>
<feature type="binding site" evidence="1">
    <location>
        <begin position="184"/>
        <end position="191"/>
    </location>
    <ligand>
        <name>GTP</name>
        <dbReference type="ChEBI" id="CHEBI:37565"/>
        <label>2</label>
    </ligand>
</feature>
<feature type="binding site" evidence="1">
    <location>
        <begin position="231"/>
        <end position="235"/>
    </location>
    <ligand>
        <name>GTP</name>
        <dbReference type="ChEBI" id="CHEBI:37565"/>
        <label>2</label>
    </ligand>
</feature>
<feature type="binding site" evidence="1">
    <location>
        <begin position="296"/>
        <end position="299"/>
    </location>
    <ligand>
        <name>GTP</name>
        <dbReference type="ChEBI" id="CHEBI:37565"/>
        <label>2</label>
    </ligand>
</feature>
<accession>Q3AI13</accession>
<comment type="function">
    <text evidence="1">GTPase that plays an essential role in the late steps of ribosome biogenesis.</text>
</comment>
<comment type="subunit">
    <text evidence="1">Associates with the 50S ribosomal subunit.</text>
</comment>
<comment type="similarity">
    <text evidence="1">Belongs to the TRAFAC class TrmE-Era-EngA-EngB-Septin-like GTPase superfamily. EngA (Der) GTPase family.</text>
</comment>
<sequence>MTRPVVAIIGRPNVGKSTLVNRLCRSREAIVHDQPGVTRDRTYQDGYWGDREFKVVDTGGLVFDDDSEFLPEIREQAALALEEASVALVIVDGQQGLTAADESIAEFLRSHRCPTLLAVNKCESPEQGLAMAGEFWSLGLGEPHPISAIHGAGTGELLDQVLTFLPPKDQEGDEEEPIQMAIIGRPNVGKSSLLNAICGEQRAIVSPIRGTTRDTIDTSIIRENRPWRLVDTAGIRRRRSVNYGPEFFGINRSFKAIERSDVCVLVIDALDGVTEQDQRLAGRIEEDGRACVVVVNKWDALEKDSHTMTAMEKELRSKLYFLDWAPMLFTSALTGQRVESIFALAALAVEQHRRRVSTSVVNEVLKEALSWRSPPTTRGGRQGKLYYGTQVASRPPSFTLFVNDPKMFGETYRRYVERQIREGLGFDGSPLRLFWRGKQQRDAERDLARQQSRKG</sequence>
<gene>
    <name evidence="1" type="primary">der</name>
    <name type="synonym">engA</name>
    <name type="ordered locus">Syncc9605_2028</name>
</gene>
<protein>
    <recommendedName>
        <fullName evidence="1">GTPase Der</fullName>
    </recommendedName>
    <alternativeName>
        <fullName evidence="1">GTP-binding protein EngA</fullName>
    </alternativeName>
</protein>
<evidence type="ECO:0000255" key="1">
    <source>
        <dbReference type="HAMAP-Rule" id="MF_00195"/>
    </source>
</evidence>
<reference key="1">
    <citation type="submission" date="2005-07" db="EMBL/GenBank/DDBJ databases">
        <title>Complete sequence of Synechococcus sp. CC9605.</title>
        <authorList>
            <consortium name="US DOE Joint Genome Institute"/>
            <person name="Copeland A."/>
            <person name="Lucas S."/>
            <person name="Lapidus A."/>
            <person name="Barry K."/>
            <person name="Detter J.C."/>
            <person name="Glavina T."/>
            <person name="Hammon N."/>
            <person name="Israni S."/>
            <person name="Pitluck S."/>
            <person name="Schmutz J."/>
            <person name="Martinez M."/>
            <person name="Larimer F."/>
            <person name="Land M."/>
            <person name="Kyrpides N."/>
            <person name="Ivanova N."/>
            <person name="Richardson P."/>
        </authorList>
    </citation>
    <scope>NUCLEOTIDE SEQUENCE [LARGE SCALE GENOMIC DNA]</scope>
    <source>
        <strain>CC9605</strain>
    </source>
</reference>
<keyword id="KW-0342">GTP-binding</keyword>
<keyword id="KW-0547">Nucleotide-binding</keyword>
<keyword id="KW-0677">Repeat</keyword>
<keyword id="KW-0690">Ribosome biogenesis</keyword>
<proteinExistence type="inferred from homology"/>